<reference key="1">
    <citation type="journal article" date="2007" name="Dev. Biol.">
        <title>Essential role of lysyl oxidases in notochord development.</title>
        <authorList>
            <person name="Gansner J.M."/>
            <person name="Mendelsohn B.A."/>
            <person name="Hultman K.A."/>
            <person name="Johnson S.L."/>
            <person name="Gitlin J.D."/>
        </authorList>
    </citation>
    <scope>NUCLEOTIDE SEQUENCE [MRNA]</scope>
    <scope>DEVELOPMENTAL STAGE</scope>
</reference>
<reference key="2">
    <citation type="journal article" date="2013" name="Nature">
        <title>The zebrafish reference genome sequence and its relationship to the human genome.</title>
        <authorList>
            <person name="Howe K."/>
            <person name="Clark M.D."/>
            <person name="Torroja C.F."/>
            <person name="Torrance J."/>
            <person name="Berthelot C."/>
            <person name="Muffato M."/>
            <person name="Collins J.E."/>
            <person name="Humphray S."/>
            <person name="McLaren K."/>
            <person name="Matthews L."/>
            <person name="McLaren S."/>
            <person name="Sealy I."/>
            <person name="Caccamo M."/>
            <person name="Churcher C."/>
            <person name="Scott C."/>
            <person name="Barrett J.C."/>
            <person name="Koch R."/>
            <person name="Rauch G.J."/>
            <person name="White S."/>
            <person name="Chow W."/>
            <person name="Kilian B."/>
            <person name="Quintais L.T."/>
            <person name="Guerra-Assuncao J.A."/>
            <person name="Zhou Y."/>
            <person name="Gu Y."/>
            <person name="Yen J."/>
            <person name="Vogel J.H."/>
            <person name="Eyre T."/>
            <person name="Redmond S."/>
            <person name="Banerjee R."/>
            <person name="Chi J."/>
            <person name="Fu B."/>
            <person name="Langley E."/>
            <person name="Maguire S.F."/>
            <person name="Laird G.K."/>
            <person name="Lloyd D."/>
            <person name="Kenyon E."/>
            <person name="Donaldson S."/>
            <person name="Sehra H."/>
            <person name="Almeida-King J."/>
            <person name="Loveland J."/>
            <person name="Trevanion S."/>
            <person name="Jones M."/>
            <person name="Quail M."/>
            <person name="Willey D."/>
            <person name="Hunt A."/>
            <person name="Burton J."/>
            <person name="Sims S."/>
            <person name="McLay K."/>
            <person name="Plumb B."/>
            <person name="Davis J."/>
            <person name="Clee C."/>
            <person name="Oliver K."/>
            <person name="Clark R."/>
            <person name="Riddle C."/>
            <person name="Elliot D."/>
            <person name="Threadgold G."/>
            <person name="Harden G."/>
            <person name="Ware D."/>
            <person name="Begum S."/>
            <person name="Mortimore B."/>
            <person name="Kerry G."/>
            <person name="Heath P."/>
            <person name="Phillimore B."/>
            <person name="Tracey A."/>
            <person name="Corby N."/>
            <person name="Dunn M."/>
            <person name="Johnson C."/>
            <person name="Wood J."/>
            <person name="Clark S."/>
            <person name="Pelan S."/>
            <person name="Griffiths G."/>
            <person name="Smith M."/>
            <person name="Glithero R."/>
            <person name="Howden P."/>
            <person name="Barker N."/>
            <person name="Lloyd C."/>
            <person name="Stevens C."/>
            <person name="Harley J."/>
            <person name="Holt K."/>
            <person name="Panagiotidis G."/>
            <person name="Lovell J."/>
            <person name="Beasley H."/>
            <person name="Henderson C."/>
            <person name="Gordon D."/>
            <person name="Auger K."/>
            <person name="Wright D."/>
            <person name="Collins J."/>
            <person name="Raisen C."/>
            <person name="Dyer L."/>
            <person name="Leung K."/>
            <person name="Robertson L."/>
            <person name="Ambridge K."/>
            <person name="Leongamornlert D."/>
            <person name="McGuire S."/>
            <person name="Gilderthorp R."/>
            <person name="Griffiths C."/>
            <person name="Manthravadi D."/>
            <person name="Nichol S."/>
            <person name="Barker G."/>
            <person name="Whitehead S."/>
            <person name="Kay M."/>
            <person name="Brown J."/>
            <person name="Murnane C."/>
            <person name="Gray E."/>
            <person name="Humphries M."/>
            <person name="Sycamore N."/>
            <person name="Barker D."/>
            <person name="Saunders D."/>
            <person name="Wallis J."/>
            <person name="Babbage A."/>
            <person name="Hammond S."/>
            <person name="Mashreghi-Mohammadi M."/>
            <person name="Barr L."/>
            <person name="Martin S."/>
            <person name="Wray P."/>
            <person name="Ellington A."/>
            <person name="Matthews N."/>
            <person name="Ellwood M."/>
            <person name="Woodmansey R."/>
            <person name="Clark G."/>
            <person name="Cooper J."/>
            <person name="Tromans A."/>
            <person name="Grafham D."/>
            <person name="Skuce C."/>
            <person name="Pandian R."/>
            <person name="Andrews R."/>
            <person name="Harrison E."/>
            <person name="Kimberley A."/>
            <person name="Garnett J."/>
            <person name="Fosker N."/>
            <person name="Hall R."/>
            <person name="Garner P."/>
            <person name="Kelly D."/>
            <person name="Bird C."/>
            <person name="Palmer S."/>
            <person name="Gehring I."/>
            <person name="Berger A."/>
            <person name="Dooley C.M."/>
            <person name="Ersan-Urun Z."/>
            <person name="Eser C."/>
            <person name="Geiger H."/>
            <person name="Geisler M."/>
            <person name="Karotki L."/>
            <person name="Kirn A."/>
            <person name="Konantz J."/>
            <person name="Konantz M."/>
            <person name="Oberlander M."/>
            <person name="Rudolph-Geiger S."/>
            <person name="Teucke M."/>
            <person name="Lanz C."/>
            <person name="Raddatz G."/>
            <person name="Osoegawa K."/>
            <person name="Zhu B."/>
            <person name="Rapp A."/>
            <person name="Widaa S."/>
            <person name="Langford C."/>
            <person name="Yang F."/>
            <person name="Schuster S.C."/>
            <person name="Carter N.P."/>
            <person name="Harrow J."/>
            <person name="Ning Z."/>
            <person name="Herrero J."/>
            <person name="Searle S.M."/>
            <person name="Enright A."/>
            <person name="Geisler R."/>
            <person name="Plasterk R.H."/>
            <person name="Lee C."/>
            <person name="Westerfield M."/>
            <person name="de Jong P.J."/>
            <person name="Zon L.I."/>
            <person name="Postlethwait J.H."/>
            <person name="Nusslein-Volhard C."/>
            <person name="Hubbard T.J."/>
            <person name="Roest Crollius H."/>
            <person name="Rogers J."/>
            <person name="Stemple D.L."/>
        </authorList>
    </citation>
    <scope>NUCLEOTIDE SEQUENCE [LARGE SCALE GENOMIC DNA]</scope>
    <source>
        <strain>Tuebingen</strain>
    </source>
</reference>
<reference key="3">
    <citation type="submission" date="2006-12" db="EMBL/GenBank/DDBJ databases">
        <authorList>
            <consortium name="NIH - Zebrafish Gene Collection (ZGC) project"/>
        </authorList>
    </citation>
    <scope>NUCLEOTIDE SEQUENCE [LARGE SCALE MRNA]</scope>
    <source>
        <tissue>Embryo</tissue>
        <tissue>Kidney</tissue>
    </source>
</reference>
<reference key="4">
    <citation type="journal article" date="2011" name="Blood">
        <title>Lysyl oxidase-like protein-2 regulates sprouting angiogenesis and type IV collagen assembly in the endothelial basement membrane.</title>
        <authorList>
            <person name="Bignon M."/>
            <person name="Pichol-Thievend C."/>
            <person name="Hardouin J."/>
            <person name="Malbouyres M."/>
            <person name="Brechot N."/>
            <person name="Nasciutti L."/>
            <person name="Barret A."/>
            <person name="Teillon J."/>
            <person name="Guillon E."/>
            <person name="Etienne E."/>
            <person name="Caron M."/>
            <person name="Joubert-Caron R."/>
            <person name="Monnot C."/>
            <person name="Ruggiero F."/>
            <person name="Muller L."/>
            <person name="Germain S."/>
        </authorList>
    </citation>
    <scope>IDENTIFICATION</scope>
</reference>
<reference key="5">
    <citation type="journal article" date="2015" name="Mol. Cell">
        <title>LOXL2 oxidizes methylated TAF10 and controls TFIID-dependent genes during neural progenitor differentiation.</title>
        <authorList>
            <person name="Iturbide A."/>
            <person name="Pascual-Reguant L."/>
            <person name="Fargas L."/>
            <person name="Cebria J.P."/>
            <person name="Alsina B."/>
            <person name="Garcia de Herreros A."/>
            <person name="Peiro S."/>
        </authorList>
    </citation>
    <scope>FUNCTION</scope>
    <scope>DEVELOPMENTAL STAGE</scope>
    <scope>DISRUPTION PHENOTYPE</scope>
</reference>
<gene>
    <name type="primary">loxl2b</name>
    <name type="ORF">si:dkeyp-32b1.1</name>
    <name type="ORF">zgc:158414</name>
</gene>
<name>LOL2B_DANRE</name>
<feature type="signal peptide" evidence="5">
    <location>
        <begin position="1"/>
        <end position="20"/>
    </location>
</feature>
<feature type="chain" id="PRO_0000418005" description="Lysyl oxidase homolog 2B">
    <location>
        <begin position="21"/>
        <end position="762"/>
    </location>
</feature>
<feature type="domain" description="SRCR 1" evidence="6">
    <location>
        <begin position="53"/>
        <end position="154"/>
    </location>
</feature>
<feature type="domain" description="SRCR 2" evidence="6">
    <location>
        <begin position="183"/>
        <end position="292"/>
    </location>
</feature>
<feature type="domain" description="SRCR 3" evidence="6">
    <location>
        <begin position="316"/>
        <end position="417"/>
    </location>
</feature>
<feature type="domain" description="SRCR 4" evidence="6">
    <location>
        <begin position="427"/>
        <end position="536"/>
    </location>
</feature>
<feature type="region of interest" description="Lysyl-oxidase like" evidence="1">
    <location>
        <begin position="540"/>
        <end position="742"/>
    </location>
</feature>
<feature type="binding site" evidence="4">
    <location>
        <position position="541"/>
    </location>
    <ligand>
        <name>Ca(2+)</name>
        <dbReference type="ChEBI" id="CHEBI:29108"/>
    </ligand>
</feature>
<feature type="binding site" evidence="4">
    <location>
        <position position="542"/>
    </location>
    <ligand>
        <name>Ca(2+)</name>
        <dbReference type="ChEBI" id="CHEBI:29108"/>
    </ligand>
</feature>
<feature type="binding site" evidence="4">
    <location>
        <position position="617"/>
    </location>
    <ligand>
        <name>Cu cation</name>
        <dbReference type="ChEBI" id="CHEBI:23378"/>
    </ligand>
</feature>
<feature type="binding site" evidence="4">
    <location>
        <position position="619"/>
    </location>
    <ligand>
        <name>Cu cation</name>
        <dbReference type="ChEBI" id="CHEBI:23378"/>
    </ligand>
</feature>
<feature type="binding site" evidence="4">
    <location>
        <position position="621"/>
    </location>
    <ligand>
        <name>Cu cation</name>
        <dbReference type="ChEBI" id="CHEBI:23378"/>
    </ligand>
</feature>
<feature type="binding site" evidence="4">
    <location>
        <position position="713"/>
    </location>
    <ligand>
        <name>Ca(2+)</name>
        <dbReference type="ChEBI" id="CHEBI:29108"/>
    </ligand>
</feature>
<feature type="binding site" evidence="4">
    <location>
        <position position="715"/>
    </location>
    <ligand>
        <name>Ca(2+)</name>
        <dbReference type="ChEBI" id="CHEBI:29108"/>
    </ligand>
</feature>
<feature type="binding site" evidence="4">
    <location>
        <position position="718"/>
    </location>
    <ligand>
        <name>Ca(2+)</name>
        <dbReference type="ChEBI" id="CHEBI:29108"/>
    </ligand>
</feature>
<feature type="binding site" evidence="4">
    <location>
        <position position="719"/>
    </location>
    <ligand>
        <name>Ca(2+)</name>
        <dbReference type="ChEBI" id="CHEBI:29108"/>
    </ligand>
</feature>
<feature type="modified residue" description="2',4',5'-topaquinone" evidence="2">
    <location>
        <position position="680"/>
    </location>
</feature>
<feature type="glycosylation site" description="N-linked (GlcNAc...) asparagine" evidence="5">
    <location>
        <position position="278"/>
    </location>
</feature>
<feature type="glycosylation site" description="N-linked (GlcNAc...) asparagine" evidence="5">
    <location>
        <position position="447"/>
    </location>
</feature>
<feature type="glycosylation site" description="N-linked (GlcNAc...) asparagine" evidence="5">
    <location>
        <position position="635"/>
    </location>
</feature>
<feature type="disulfide bond" evidence="6">
    <location>
        <begin position="79"/>
        <end position="143"/>
    </location>
</feature>
<feature type="disulfide bond" evidence="6">
    <location>
        <begin position="92"/>
        <end position="153"/>
    </location>
</feature>
<feature type="disulfide bond" evidence="6">
    <location>
        <begin position="123"/>
        <end position="133"/>
    </location>
</feature>
<feature type="disulfide bond" evidence="6">
    <location>
        <begin position="213"/>
        <end position="281"/>
    </location>
</feature>
<feature type="disulfide bond" evidence="6">
    <location>
        <begin position="226"/>
        <end position="291"/>
    </location>
</feature>
<feature type="disulfide bond" evidence="6">
    <location>
        <begin position="260"/>
        <end position="270"/>
    </location>
</feature>
<feature type="disulfide bond" evidence="6">
    <location>
        <begin position="341"/>
        <end position="406"/>
    </location>
</feature>
<feature type="disulfide bond" evidence="6">
    <location>
        <begin position="354"/>
        <end position="416"/>
    </location>
</feature>
<feature type="disulfide bond" evidence="6">
    <location>
        <begin position="385"/>
        <end position="395"/>
    </location>
</feature>
<feature type="disulfide bond" evidence="6">
    <location>
        <begin position="456"/>
        <end position="522"/>
    </location>
</feature>
<feature type="disulfide bond" evidence="6">
    <location>
        <begin position="469"/>
        <end position="535"/>
    </location>
</feature>
<feature type="disulfide bond" evidence="6">
    <location>
        <begin position="503"/>
        <end position="513"/>
    </location>
</feature>
<feature type="disulfide bond" evidence="4">
    <location>
        <begin position="565"/>
        <end position="616"/>
    </location>
</feature>
<feature type="disulfide bond" evidence="4">
    <location>
        <begin position="571"/>
        <end position="686"/>
    </location>
</feature>
<feature type="disulfide bond" evidence="4">
    <location>
        <begin position="648"/>
        <end position="664"/>
    </location>
</feature>
<feature type="disulfide bond" evidence="4">
    <location>
        <begin position="654"/>
        <end position="676"/>
    </location>
</feature>
<feature type="disulfide bond" evidence="6">
    <location>
        <begin position="723"/>
        <end position="737"/>
    </location>
</feature>
<feature type="cross-link" description="Lysine tyrosylquinone (Lys-Tyr)" evidence="2">
    <location>
        <begin position="644"/>
        <end position="680"/>
    </location>
</feature>
<feature type="sequence conflict" description="In Ref. 3; AAI55757." evidence="9" ref="3">
    <original>K</original>
    <variation>E</variation>
    <location>
        <position position="128"/>
    </location>
</feature>
<feature type="sequence conflict" description="In Ref. 1; ABM86968." evidence="9" ref="1">
    <original>G</original>
    <variation>S</variation>
    <location>
        <position position="230"/>
    </location>
</feature>
<evidence type="ECO:0000250" key="1"/>
<evidence type="ECO:0000250" key="2">
    <source>
        <dbReference type="UniProtKB" id="P33072"/>
    </source>
</evidence>
<evidence type="ECO:0000250" key="3">
    <source>
        <dbReference type="UniProtKB" id="P58022"/>
    </source>
</evidence>
<evidence type="ECO:0000250" key="4">
    <source>
        <dbReference type="UniProtKB" id="Q9Y4K0"/>
    </source>
</evidence>
<evidence type="ECO:0000255" key="5"/>
<evidence type="ECO:0000255" key="6">
    <source>
        <dbReference type="PROSITE-ProRule" id="PRU00196"/>
    </source>
</evidence>
<evidence type="ECO:0000269" key="7">
    <source>
    </source>
</evidence>
<evidence type="ECO:0000269" key="8">
    <source>
    </source>
</evidence>
<evidence type="ECO:0000305" key="9"/>
<comment type="function">
    <text evidence="3 4 8">Mediates the post-translational oxidative deamination of lysine residues on target proteins leading to the formation of deaminated lysine (allysine) (By similarity). Acts as a transcription corepressor and specifically mediates deamination of trimethylated 'Lys-4' of histone H3 (H3K4me3), a specific tag for epigenetic transcriptional activation (By similarity). Shows no activity against histone H3 when it is trimethylated on 'Lys-9' (H3K9me3) or 'Lys-27' (H3K27me3) or when 'Lys-4' is monomethylated (H3K4me1) or dimethylated (H3K4me2) (By similarity). Also mediates deamination of methylated TAF10, a member of the transcription factor IID (TFIID) complex, which induces release of TAF10 from promoters, leading to inhibition of TFIID-dependent transcription (By similarity). LOXL2-mediated deamination of TAF10 results in transcriptional repression of genes required for embryonic stem cell pluripotency (By similarity). Involved in epithelial to mesenchymal transition (EMT) and participates in repression of E-cadherin, probably by mediating deamination of histone H3 (By similarity). When secreted into the extracellular matrix, promotes cross-linking of extracellular matrix proteins by mediating oxidative deamination of peptidyl lysine residues in precursors to fibrous collagen and elastin (By similarity). Acts as a regulator of sprouting angiogenesis, probably via collagen IV scaffolding (PubMed:21835952). Acts as a regulator of chondrocyte differentiation, probably by regulating expression of factors that control chondrocyte differentiation (By similarity). Required with loxl2a for correct expression of Sox2 and for neural differentiation (PubMed:25959397).</text>
</comment>
<comment type="catalytic activity">
    <reaction evidence="4">
        <text>L-lysyl-[protein] + O2 + H2O = (S)-2-amino-6-oxohexanoyl-[protein] + H2O2 + NH4(+)</text>
        <dbReference type="Rhea" id="RHEA:24544"/>
        <dbReference type="Rhea" id="RHEA-COMP:9752"/>
        <dbReference type="Rhea" id="RHEA-COMP:12448"/>
        <dbReference type="ChEBI" id="CHEBI:15377"/>
        <dbReference type="ChEBI" id="CHEBI:15379"/>
        <dbReference type="ChEBI" id="CHEBI:16240"/>
        <dbReference type="ChEBI" id="CHEBI:28938"/>
        <dbReference type="ChEBI" id="CHEBI:29969"/>
        <dbReference type="ChEBI" id="CHEBI:131803"/>
        <dbReference type="EC" id="1.4.3.13"/>
    </reaction>
</comment>
<comment type="cofactor">
    <cofactor evidence="4">
        <name>Cu cation</name>
        <dbReference type="ChEBI" id="CHEBI:23378"/>
    </cofactor>
</comment>
<comment type="cofactor">
    <cofactor evidence="4">
        <name>lysine tyrosylquinone residue</name>
        <dbReference type="ChEBI" id="CHEBI:20489"/>
    </cofactor>
    <text evidence="2 4">Contains 1 lysine tyrosylquinone.</text>
</comment>
<comment type="subcellular location">
    <subcellularLocation>
        <location evidence="4">Secreted</location>
        <location evidence="4">Extracellular space</location>
        <location evidence="4">Extracellular matrix</location>
        <location evidence="4">Basement membrane</location>
    </subcellularLocation>
    <subcellularLocation>
        <location evidence="4">Nucleus</location>
    </subcellularLocation>
    <subcellularLocation>
        <location evidence="4">Chromosome</location>
    </subcellularLocation>
    <subcellularLocation>
        <location evidence="4">Endoplasmic reticulum</location>
    </subcellularLocation>
    <text evidence="4">Associated with chromatin. It is unclear how LOXL2 is nuclear as it contains a signal sequence and has been shown to be secreted. However, a number of reports confirm its intracellular location and its key role in transcription regulation.</text>
</comment>
<comment type="developmental stage">
    <text evidence="7 8">Expression is initiated during early development throughout the notochord and extinguished between 24 and 48 hours after fertilization (PubMed:17543297). At 24 hours after fertilization, expressed ubiquitously throughout the embryo (PubMed:25959397).</text>
</comment>
<comment type="PTM">
    <text evidence="4">The lysine tyrosylquinone cross-link (LTQ) is generated by condensation of the epsilon-amino group of a lysine with a topaquinone produced by oxidation of tyrosine.</text>
</comment>
<comment type="disruption phenotype">
    <text evidence="8">Morpholino knockdown of loxl2a and loxl2b in the embryo results in increased expression of Sox2 in the central nervous system, particularly in the eye, hindbrain and spinal cord. It also leads to impaired neural differentiation with morphological defects in the brain where the anterior brain is rounder than normal and the eyes present a flatter curvature. Embryo development is also compromised.</text>
</comment>
<comment type="similarity">
    <text evidence="9">Belongs to the lysyl oxidase family.</text>
</comment>
<comment type="sequence caution" evidence="9">
    <conflict type="erroneous gene model prediction">
        <sequence resource="EMBL-CDS" id="CAN88496"/>
    </conflict>
</comment>
<dbReference type="EC" id="1.4.3.13" evidence="4"/>
<dbReference type="EMBL" id="EF030482">
    <property type="protein sequence ID" value="ABM86968.1"/>
    <property type="molecule type" value="mRNA"/>
</dbReference>
<dbReference type="EMBL" id="CT990639">
    <property type="protein sequence ID" value="CAQ13607.1"/>
    <property type="molecule type" value="Genomic_DNA"/>
</dbReference>
<dbReference type="EMBL" id="CR545472">
    <property type="protein sequence ID" value="CAN88496.1"/>
    <property type="status" value="ALT_SEQ"/>
    <property type="molecule type" value="Genomic_DNA"/>
</dbReference>
<dbReference type="EMBL" id="BX323062">
    <property type="status" value="NOT_ANNOTATED_CDS"/>
    <property type="molecule type" value="Genomic_DNA"/>
</dbReference>
<dbReference type="EMBL" id="BC129226">
    <property type="protein sequence ID" value="AAI29227.1"/>
    <property type="molecule type" value="mRNA"/>
</dbReference>
<dbReference type="EMBL" id="BC155756">
    <property type="protein sequence ID" value="AAI55757.1"/>
    <property type="molecule type" value="mRNA"/>
</dbReference>
<dbReference type="RefSeq" id="NP_001074095.1">
    <property type="nucleotide sequence ID" value="NM_001080626.1"/>
</dbReference>
<dbReference type="RefSeq" id="XP_009299828.1">
    <property type="nucleotide sequence ID" value="XM_009301553.2"/>
</dbReference>
<dbReference type="SMR" id="A1L1V4"/>
<dbReference type="FunCoup" id="A1L1V4">
    <property type="interactions" value="1375"/>
</dbReference>
<dbReference type="STRING" id="7955.ENSDARP00000146651"/>
<dbReference type="GlyCosmos" id="A1L1V4">
    <property type="glycosylation" value="3 sites, No reported glycans"/>
</dbReference>
<dbReference type="PaxDb" id="7955-ENSDARP00000118755"/>
<dbReference type="Ensembl" id="ENSDART00000064701">
    <property type="protein sequence ID" value="ENSDARP00000064700"/>
    <property type="gene ID" value="ENSDARG00000044074"/>
</dbReference>
<dbReference type="Ensembl" id="ENSDART00000144013">
    <property type="protein sequence ID" value="ENSDARP00000118755"/>
    <property type="gene ID" value="ENSDARG00000044074"/>
</dbReference>
<dbReference type="Ensembl" id="ENSDART00000184129">
    <property type="protein sequence ID" value="ENSDARP00000146651"/>
    <property type="gene ID" value="ENSDARG00000044074"/>
</dbReference>
<dbReference type="Ensembl" id="ENSDART00000185815">
    <property type="protein sequence ID" value="ENSDARP00000157626"/>
    <property type="gene ID" value="ENSDARG00000044074"/>
</dbReference>
<dbReference type="GeneID" id="791144"/>
<dbReference type="KEGG" id="dre:791144"/>
<dbReference type="AGR" id="ZFIN:ZDB-GENE-050208-29"/>
<dbReference type="CTD" id="791144"/>
<dbReference type="ZFIN" id="ZDB-GENE-050208-29">
    <property type="gene designation" value="loxl2b"/>
</dbReference>
<dbReference type="eggNOG" id="ENOG502QSX8">
    <property type="taxonomic scope" value="Eukaryota"/>
</dbReference>
<dbReference type="HOGENOM" id="CLU_002555_3_0_1"/>
<dbReference type="InParanoid" id="A1L1V4"/>
<dbReference type="OMA" id="MALSHCR"/>
<dbReference type="OrthoDB" id="547291at2759"/>
<dbReference type="PhylomeDB" id="A1L1V4"/>
<dbReference type="TreeFam" id="TF326061"/>
<dbReference type="BRENDA" id="1.4.3.13">
    <property type="organism ID" value="928"/>
</dbReference>
<dbReference type="Reactome" id="R-DRE-2243919">
    <property type="pathway name" value="Crosslinking of collagen fibrils"/>
</dbReference>
<dbReference type="PRO" id="PR:A1L1V4"/>
<dbReference type="Proteomes" id="UP000000437">
    <property type="component" value="Chromosome 5"/>
</dbReference>
<dbReference type="Bgee" id="ENSDARG00000044074">
    <property type="expression patterns" value="Expressed in head mesenchyme and 23 other cell types or tissues"/>
</dbReference>
<dbReference type="GO" id="GO:0005604">
    <property type="term" value="C:basement membrane"/>
    <property type="evidence" value="ECO:0000250"/>
    <property type="project" value="UniProtKB"/>
</dbReference>
<dbReference type="GO" id="GO:0000785">
    <property type="term" value="C:chromatin"/>
    <property type="evidence" value="ECO:0000250"/>
    <property type="project" value="UniProtKB"/>
</dbReference>
<dbReference type="GO" id="GO:0062023">
    <property type="term" value="C:collagen-containing extracellular matrix"/>
    <property type="evidence" value="ECO:0000318"/>
    <property type="project" value="GO_Central"/>
</dbReference>
<dbReference type="GO" id="GO:0005783">
    <property type="term" value="C:endoplasmic reticulum"/>
    <property type="evidence" value="ECO:0000250"/>
    <property type="project" value="UniProtKB"/>
</dbReference>
<dbReference type="GO" id="GO:0005615">
    <property type="term" value="C:extracellular space"/>
    <property type="evidence" value="ECO:0000318"/>
    <property type="project" value="GO_Central"/>
</dbReference>
<dbReference type="GO" id="GO:0016020">
    <property type="term" value="C:membrane"/>
    <property type="evidence" value="ECO:0007669"/>
    <property type="project" value="InterPro"/>
</dbReference>
<dbReference type="GO" id="GO:0005634">
    <property type="term" value="C:nucleus"/>
    <property type="evidence" value="ECO:0000250"/>
    <property type="project" value="UniProtKB"/>
</dbReference>
<dbReference type="GO" id="GO:0005509">
    <property type="term" value="F:calcium ion binding"/>
    <property type="evidence" value="ECO:0000250"/>
    <property type="project" value="UniProtKB"/>
</dbReference>
<dbReference type="GO" id="GO:0005507">
    <property type="term" value="F:copper ion binding"/>
    <property type="evidence" value="ECO:0000250"/>
    <property type="project" value="UniProtKB"/>
</dbReference>
<dbReference type="GO" id="GO:0004720">
    <property type="term" value="F:protein-lysine 6-oxidase activity"/>
    <property type="evidence" value="ECO:0000250"/>
    <property type="project" value="UniProtKB"/>
</dbReference>
<dbReference type="GO" id="GO:0030199">
    <property type="term" value="P:collagen fibril organization"/>
    <property type="evidence" value="ECO:0000250"/>
    <property type="project" value="UniProtKB"/>
</dbReference>
<dbReference type="GO" id="GO:0043542">
    <property type="term" value="P:endothelial cell migration"/>
    <property type="evidence" value="ECO:0000250"/>
    <property type="project" value="UniProtKB"/>
</dbReference>
<dbReference type="GO" id="GO:0001935">
    <property type="term" value="P:endothelial cell proliferation"/>
    <property type="evidence" value="ECO:0000250"/>
    <property type="project" value="UniProtKB"/>
</dbReference>
<dbReference type="GO" id="GO:0001837">
    <property type="term" value="P:epithelial to mesenchymal transition"/>
    <property type="evidence" value="ECO:0000250"/>
    <property type="project" value="UniProtKB"/>
</dbReference>
<dbReference type="GO" id="GO:0070828">
    <property type="term" value="P:heterochromatin organization"/>
    <property type="evidence" value="ECO:0000250"/>
    <property type="project" value="UniProtKB"/>
</dbReference>
<dbReference type="GO" id="GO:0045892">
    <property type="term" value="P:negative regulation of DNA-templated transcription"/>
    <property type="evidence" value="ECO:0000250"/>
    <property type="project" value="UniProtKB"/>
</dbReference>
<dbReference type="GO" id="GO:1902455">
    <property type="term" value="P:negative regulation of stem cell population maintenance"/>
    <property type="evidence" value="ECO:0000250"/>
    <property type="project" value="UniProtKB"/>
</dbReference>
<dbReference type="GO" id="GO:0000122">
    <property type="term" value="P:negative regulation of transcription by RNA polymerase II"/>
    <property type="evidence" value="ECO:0000250"/>
    <property type="project" value="UniProtKB"/>
</dbReference>
<dbReference type="GO" id="GO:0018057">
    <property type="term" value="P:peptidyl-lysine oxidation"/>
    <property type="evidence" value="ECO:0000250"/>
    <property type="project" value="UniProtKB"/>
</dbReference>
<dbReference type="GO" id="GO:0032332">
    <property type="term" value="P:positive regulation of chondrocyte differentiation"/>
    <property type="evidence" value="ECO:0000250"/>
    <property type="project" value="UniProtKB"/>
</dbReference>
<dbReference type="GO" id="GO:0010718">
    <property type="term" value="P:positive regulation of epithelial to mesenchymal transition"/>
    <property type="evidence" value="ECO:0000250"/>
    <property type="project" value="UniProtKB"/>
</dbReference>
<dbReference type="GO" id="GO:0001666">
    <property type="term" value="P:response to hypoxia"/>
    <property type="evidence" value="ECO:0000250"/>
    <property type="project" value="UniProtKB"/>
</dbReference>
<dbReference type="GO" id="GO:0002040">
    <property type="term" value="P:sprouting angiogenesis"/>
    <property type="evidence" value="ECO:0000250"/>
    <property type="project" value="UniProtKB"/>
</dbReference>
<dbReference type="FunFam" id="3.10.250.10:FF:000001">
    <property type="entry name" value="Lysyl oxidase 4 isoform X1"/>
    <property type="match status" value="2"/>
</dbReference>
<dbReference type="FunFam" id="3.10.250.10:FF:000008">
    <property type="entry name" value="Lysyl oxidase homolog 2"/>
    <property type="match status" value="1"/>
</dbReference>
<dbReference type="FunFam" id="3.10.250.10:FF:000014">
    <property type="entry name" value="Lysyl oxidase homolog 2"/>
    <property type="match status" value="1"/>
</dbReference>
<dbReference type="Gene3D" id="3.10.250.10">
    <property type="entry name" value="SRCR-like domain"/>
    <property type="match status" value="4"/>
</dbReference>
<dbReference type="InterPro" id="IPR050912">
    <property type="entry name" value="LOX-like_protein"/>
</dbReference>
<dbReference type="InterPro" id="IPR001695">
    <property type="entry name" value="Lysyl_oxidase"/>
</dbReference>
<dbReference type="InterPro" id="IPR019828">
    <property type="entry name" value="Lysyl_oxidase_CS"/>
</dbReference>
<dbReference type="InterPro" id="IPR001190">
    <property type="entry name" value="SRCR"/>
</dbReference>
<dbReference type="InterPro" id="IPR036772">
    <property type="entry name" value="SRCR-like_dom_sf"/>
</dbReference>
<dbReference type="PANTHER" id="PTHR45817:SF1">
    <property type="entry name" value="LYSYL OXIDASE HOMOLOG 2"/>
    <property type="match status" value="1"/>
</dbReference>
<dbReference type="PANTHER" id="PTHR45817">
    <property type="entry name" value="LYSYL OXIDASE-LIKE-RELATED"/>
    <property type="match status" value="1"/>
</dbReference>
<dbReference type="Pfam" id="PF01186">
    <property type="entry name" value="Lysyl_oxidase"/>
    <property type="match status" value="1"/>
</dbReference>
<dbReference type="Pfam" id="PF00530">
    <property type="entry name" value="SRCR"/>
    <property type="match status" value="4"/>
</dbReference>
<dbReference type="PRINTS" id="PR00074">
    <property type="entry name" value="LYSYLOXIDASE"/>
</dbReference>
<dbReference type="PRINTS" id="PR00258">
    <property type="entry name" value="SPERACTRCPTR"/>
</dbReference>
<dbReference type="SMART" id="SM00202">
    <property type="entry name" value="SR"/>
    <property type="match status" value="4"/>
</dbReference>
<dbReference type="SUPFAM" id="SSF56487">
    <property type="entry name" value="SRCR-like"/>
    <property type="match status" value="4"/>
</dbReference>
<dbReference type="PROSITE" id="PS00926">
    <property type="entry name" value="LYSYL_OXIDASE"/>
    <property type="match status" value="1"/>
</dbReference>
<dbReference type="PROSITE" id="PS00420">
    <property type="entry name" value="SRCR_1"/>
    <property type="match status" value="2"/>
</dbReference>
<dbReference type="PROSITE" id="PS50287">
    <property type="entry name" value="SRCR_2"/>
    <property type="match status" value="4"/>
</dbReference>
<proteinExistence type="evidence at transcript level"/>
<organism>
    <name type="scientific">Danio rerio</name>
    <name type="common">Zebrafish</name>
    <name type="synonym">Brachydanio rerio</name>
    <dbReference type="NCBI Taxonomy" id="7955"/>
    <lineage>
        <taxon>Eukaryota</taxon>
        <taxon>Metazoa</taxon>
        <taxon>Chordata</taxon>
        <taxon>Craniata</taxon>
        <taxon>Vertebrata</taxon>
        <taxon>Euteleostomi</taxon>
        <taxon>Actinopterygii</taxon>
        <taxon>Neopterygii</taxon>
        <taxon>Teleostei</taxon>
        <taxon>Ostariophysi</taxon>
        <taxon>Cypriniformes</taxon>
        <taxon>Danionidae</taxon>
        <taxon>Danioninae</taxon>
        <taxon>Danio</taxon>
    </lineage>
</organism>
<sequence length="762" mass="85503">MLALWSISFVLLCSWRLSYAQYEHLGFAIAYQEPEQDLYTPPELPADTPRIQLRLAGEKRKHNEGRVEVFYEGEWGTVCDDDFTIHAAQVICRELGYFEAISWSPSSKYGKGEGRIWFDNVHCKGKEKSLAQCESNGIGVSDCKHSEDVGVVCSDKRIPGFKFVNTLTNNINSLNIQVEDVRIRPILASYRKRIPVTEGYVEVKDGGKWKQICDDEWTQMNSRVICGMFGFPGQKRYNTRVYKMFARRRKPSYWDYTINCTGKEAHLSSCTLGHTLSNSTCEEGTPVVVSCIPGRAFAPTPMTGYKKAFRQEQPLVRLRGGAVVGEGRVEVLKNGEWGTICDDNWNLLAATVVCRELGFGSAKEALSGGQLGQGMGPVHMNEVQCSGFEKSVTECSFNMEKDSEGCSHEEDAGVKCNVPAMGFQQRLRLSGGRNPFEGRVEVLVERNGSLVWGTVCGEGWTTMEAMVVCRQLGLGFASNAFQETWYWPGAVNADAVVMSGVRCAGTEMSLSHCLHHGEYLSCPKGGGRFAAGVSCSETAPDLVLNPQVVEQTTYLEDRPMFMLQCAYEENCLASTSSATPANSPRRLLRFSSQIHNNGQSDFRPKISRENWVWHDCHRHYHSMEVFTHYDLLSTNGTKVAEGHKASFCLEDSECDEGIEKRYECANFGEQGITVGCWDTYRHDIDCQWVDITDVKPGDYIFQIVINPNYEVAESDYTNNIVKCRCRYDGHRIWMYNCHIGGSFSAETEDTFPGLINNQVTHR</sequence>
<accession>A1L1V4</accession>
<accession>A5WUR2</accession>
<accession>A6MH31</accession>
<accession>A9JRQ9</accession>
<protein>
    <recommendedName>
        <fullName>Lysyl oxidase homolog 2B</fullName>
        <ecNumber evidence="4">1.4.3.13</ecNumber>
    </recommendedName>
    <alternativeName>
        <fullName>Lysyl oxidase-like protein 2B</fullName>
    </alternativeName>
</protein>
<keyword id="KW-0084">Basement membrane</keyword>
<keyword id="KW-0106">Calcium</keyword>
<keyword id="KW-0156">Chromatin regulator</keyword>
<keyword id="KW-0158">Chromosome</keyword>
<keyword id="KW-0186">Copper</keyword>
<keyword id="KW-1015">Disulfide bond</keyword>
<keyword id="KW-0256">Endoplasmic reticulum</keyword>
<keyword id="KW-0272">Extracellular matrix</keyword>
<keyword id="KW-0325">Glycoprotein</keyword>
<keyword id="KW-0886">LTQ</keyword>
<keyword id="KW-0479">Metal-binding</keyword>
<keyword id="KW-0539">Nucleus</keyword>
<keyword id="KW-0560">Oxidoreductase</keyword>
<keyword id="KW-1185">Reference proteome</keyword>
<keyword id="KW-0677">Repeat</keyword>
<keyword id="KW-0678">Repressor</keyword>
<keyword id="KW-0964">Secreted</keyword>
<keyword id="KW-0732">Signal</keyword>
<keyword id="KW-0801">TPQ</keyword>
<keyword id="KW-0804">Transcription</keyword>
<keyword id="KW-0805">Transcription regulation</keyword>